<reference key="1">
    <citation type="journal article" date="2005" name="Nat. Biotechnol.">
        <title>Complete genome sequence of the acetic acid bacterium Gluconobacter oxydans.</title>
        <authorList>
            <person name="Prust C."/>
            <person name="Hoffmeister M."/>
            <person name="Liesegang H."/>
            <person name="Wiezer A."/>
            <person name="Fricke W.F."/>
            <person name="Ehrenreich A."/>
            <person name="Gottschalk G."/>
            <person name="Deppenmeier U."/>
        </authorList>
    </citation>
    <scope>NUCLEOTIDE SEQUENCE [LARGE SCALE GENOMIC DNA]</scope>
    <source>
        <strain>621H</strain>
    </source>
</reference>
<reference key="2">
    <citation type="thesis" date="1994" institute="Heinrich-Heine University / Duesseldorf" country="Germany">
        <authorList>
            <person name="Klasen R."/>
        </authorList>
    </citation>
    <scope>PROTEIN SEQUENCE OF 1-50</scope>
    <source>
        <strain>DSM 350</strain>
    </source>
</reference>
<evidence type="ECO:0000305" key="1"/>
<proteinExistence type="evidence at protein level"/>
<organism>
    <name type="scientific">Gluconobacter oxydans (strain 621H)</name>
    <name type="common">Gluconobacter suboxydans</name>
    <dbReference type="NCBI Taxonomy" id="290633"/>
    <lineage>
        <taxon>Bacteria</taxon>
        <taxon>Pseudomonadati</taxon>
        <taxon>Pseudomonadota</taxon>
        <taxon>Alphaproteobacteria</taxon>
        <taxon>Acetobacterales</taxon>
        <taxon>Acetobacteraceae</taxon>
        <taxon>Gluconobacter</taxon>
    </lineage>
</organism>
<accession>P80354</accession>
<accession>Q5FR14</accession>
<protein>
    <recommendedName>
        <fullName>Polyol:NADP oxidoreductase</fullName>
        <ecNumber>1.1.1.-</ecNumber>
    </recommendedName>
</protein>
<comment type="subcellular location">
    <subcellularLocation>
        <location>Cytoplasm</location>
    </subcellularLocation>
</comment>
<comment type="similarity">
    <text evidence="1">Belongs to the mannitol dehydrogenase family.</text>
</comment>
<sequence>MITRETLKSLPANVQAPPYDIDGIKPGIVHFGVGNFFRAHEAFYVEQILEHAPDWAIVGVGLTGSDRSKKKAEEFKAQDCLYSLTETAPSGKSTVRVMGALRDYLLAPADPEAVLKHLVDPAIRIVSMTITEGGYNINETTGAFDLENAAVKADLQNPEKPSTVFGYVVEALRRRRDAGGKAFTVMSCDNLRHNGNVARKAFLGYAKARDPELAKWIEENATFPNGMVDRITPTVSAEIAKKLNAASGLDDDLPLVAEDFHQWVLEDRFANGRPPLEKAGVQLVDDVTDWEHVKIRMLNAGHITLCFPGILVGYENVDDAIEDKDLRGNLENYLNKDVIPTLKAPPGMTLEGYRDSVISRFSNKAMSDQTLRIASDGCSKIQVFWTETVRRAIECKRDLSRIAFGIASYLEMLRGRDEKGGTYESSEPTYGEAQKKLAKADDFESALKLPAFDGWRDLDTSELDQKVIALRKVIREKGVKAAIPA</sequence>
<dbReference type="EC" id="1.1.1.-"/>
<dbReference type="EMBL" id="CP000009">
    <property type="protein sequence ID" value="AAW61182.1"/>
    <property type="molecule type" value="Genomic_DNA"/>
</dbReference>
<dbReference type="RefSeq" id="WP_011252969.1">
    <property type="nucleotide sequence ID" value="NC_006677.1"/>
</dbReference>
<dbReference type="SMR" id="P80354"/>
<dbReference type="STRING" id="290633.GOX1432"/>
<dbReference type="KEGG" id="gox:GOX1432"/>
<dbReference type="eggNOG" id="COG0246">
    <property type="taxonomic scope" value="Bacteria"/>
</dbReference>
<dbReference type="HOGENOM" id="CLU_027324_0_1_5"/>
<dbReference type="Proteomes" id="UP000006375">
    <property type="component" value="Chromosome"/>
</dbReference>
<dbReference type="GO" id="GO:0005737">
    <property type="term" value="C:cytoplasm"/>
    <property type="evidence" value="ECO:0007669"/>
    <property type="project" value="UniProtKB-SubCell"/>
</dbReference>
<dbReference type="GO" id="GO:0016616">
    <property type="term" value="F:oxidoreductase activity, acting on the CH-OH group of donors, NAD or NADP as acceptor"/>
    <property type="evidence" value="ECO:0007669"/>
    <property type="project" value="TreeGrafter"/>
</dbReference>
<dbReference type="Gene3D" id="1.10.1040.10">
    <property type="entry name" value="N-(1-d-carboxylethyl)-l-norvaline Dehydrogenase, domain 2"/>
    <property type="match status" value="1"/>
</dbReference>
<dbReference type="Gene3D" id="3.40.50.720">
    <property type="entry name" value="NAD(P)-binding Rossmann-like Domain"/>
    <property type="match status" value="1"/>
</dbReference>
<dbReference type="InterPro" id="IPR008927">
    <property type="entry name" value="6-PGluconate_DH-like_C_sf"/>
</dbReference>
<dbReference type="InterPro" id="IPR013328">
    <property type="entry name" value="6PGD_dom2"/>
</dbReference>
<dbReference type="InterPro" id="IPR000669">
    <property type="entry name" value="Mannitol_DH"/>
</dbReference>
<dbReference type="InterPro" id="IPR050988">
    <property type="entry name" value="Mannitol_DH/Oxidoreductase"/>
</dbReference>
<dbReference type="InterPro" id="IPR013118">
    <property type="entry name" value="Mannitol_DH_C"/>
</dbReference>
<dbReference type="InterPro" id="IPR013131">
    <property type="entry name" value="Mannitol_DH_N"/>
</dbReference>
<dbReference type="InterPro" id="IPR036291">
    <property type="entry name" value="NAD(P)-bd_dom_sf"/>
</dbReference>
<dbReference type="PANTHER" id="PTHR43362:SF1">
    <property type="entry name" value="MANNITOL DEHYDROGENASE 2-RELATED"/>
    <property type="match status" value="1"/>
</dbReference>
<dbReference type="PANTHER" id="PTHR43362">
    <property type="entry name" value="MANNITOL DEHYDROGENASE DSF1-RELATED"/>
    <property type="match status" value="1"/>
</dbReference>
<dbReference type="Pfam" id="PF01232">
    <property type="entry name" value="Mannitol_dh"/>
    <property type="match status" value="1"/>
</dbReference>
<dbReference type="Pfam" id="PF08125">
    <property type="entry name" value="Mannitol_dh_C"/>
    <property type="match status" value="1"/>
</dbReference>
<dbReference type="PRINTS" id="PR00084">
    <property type="entry name" value="MTLDHDRGNASE"/>
</dbReference>
<dbReference type="SUPFAM" id="SSF48179">
    <property type="entry name" value="6-phosphogluconate dehydrogenase C-terminal domain-like"/>
    <property type="match status" value="1"/>
</dbReference>
<dbReference type="SUPFAM" id="SSF51735">
    <property type="entry name" value="NAD(P)-binding Rossmann-fold domains"/>
    <property type="match status" value="1"/>
</dbReference>
<gene>
    <name type="primary">por</name>
    <name type="ordered locus">GOX1432</name>
</gene>
<keyword id="KW-0963">Cytoplasm</keyword>
<keyword id="KW-0903">Direct protein sequencing</keyword>
<keyword id="KW-0521">NADP</keyword>
<keyword id="KW-0560">Oxidoreductase</keyword>
<keyword id="KW-1185">Reference proteome</keyword>
<feature type="chain" id="PRO_0000058525" description="Polyol:NADP oxidoreductase">
    <location>
        <begin position="1"/>
        <end position="485"/>
    </location>
</feature>
<feature type="sequence conflict" description="In Ref. 2; AA sequence." evidence="1" ref="2">
    <original>E</original>
    <variation>F</variation>
    <location>
        <position position="50"/>
    </location>
</feature>
<name>POR_GLUOX</name>